<reference key="1">
    <citation type="submission" date="2008-05" db="EMBL/GenBank/DDBJ databases">
        <title>Genome sequence of Clostridium botulinum Ba4 strain 657.</title>
        <authorList>
            <person name="Shrivastava S."/>
            <person name="Brown J.L."/>
            <person name="Bruce D."/>
            <person name="Detter C."/>
            <person name="Munk C."/>
            <person name="Smith L.A."/>
            <person name="Smith T.J."/>
            <person name="Sutton G."/>
            <person name="Brettin T.S."/>
        </authorList>
    </citation>
    <scope>NUCLEOTIDE SEQUENCE [LARGE SCALE GENOMIC DNA]</scope>
    <source>
        <strain>657 / Type Ba4</strain>
    </source>
</reference>
<dbReference type="EC" id="3.6.1.9" evidence="1"/>
<dbReference type="EMBL" id="CP001083">
    <property type="protein sequence ID" value="ACQ54377.1"/>
    <property type="molecule type" value="Genomic_DNA"/>
</dbReference>
<dbReference type="RefSeq" id="WP_003357770.1">
    <property type="nucleotide sequence ID" value="NC_012658.1"/>
</dbReference>
<dbReference type="SMR" id="C3L3L1"/>
<dbReference type="KEGG" id="cbi:CLJ_B3262"/>
<dbReference type="HOGENOM" id="CLU_040416_0_0_9"/>
<dbReference type="Proteomes" id="UP000002333">
    <property type="component" value="Chromosome"/>
</dbReference>
<dbReference type="GO" id="GO:0005737">
    <property type="term" value="C:cytoplasm"/>
    <property type="evidence" value="ECO:0007669"/>
    <property type="project" value="UniProtKB-SubCell"/>
</dbReference>
<dbReference type="GO" id="GO:0036218">
    <property type="term" value="F:dTTP diphosphatase activity"/>
    <property type="evidence" value="ECO:0007669"/>
    <property type="project" value="RHEA"/>
</dbReference>
<dbReference type="GO" id="GO:0036221">
    <property type="term" value="F:UTP diphosphatase activity"/>
    <property type="evidence" value="ECO:0007669"/>
    <property type="project" value="RHEA"/>
</dbReference>
<dbReference type="GO" id="GO:0009117">
    <property type="term" value="P:nucleotide metabolic process"/>
    <property type="evidence" value="ECO:0007669"/>
    <property type="project" value="UniProtKB-KW"/>
</dbReference>
<dbReference type="CDD" id="cd00555">
    <property type="entry name" value="Maf"/>
    <property type="match status" value="1"/>
</dbReference>
<dbReference type="FunFam" id="3.90.950.10:FF:000016">
    <property type="entry name" value="dTTP/UTP pyrophosphatase"/>
    <property type="match status" value="1"/>
</dbReference>
<dbReference type="Gene3D" id="3.90.950.10">
    <property type="match status" value="1"/>
</dbReference>
<dbReference type="HAMAP" id="MF_00528">
    <property type="entry name" value="Maf"/>
    <property type="match status" value="1"/>
</dbReference>
<dbReference type="InterPro" id="IPR029001">
    <property type="entry name" value="ITPase-like_fam"/>
</dbReference>
<dbReference type="InterPro" id="IPR003697">
    <property type="entry name" value="Maf-like"/>
</dbReference>
<dbReference type="NCBIfam" id="TIGR00172">
    <property type="entry name" value="maf"/>
    <property type="match status" value="1"/>
</dbReference>
<dbReference type="NCBIfam" id="NF000867">
    <property type="entry name" value="PRK00078.1"/>
    <property type="match status" value="1"/>
</dbReference>
<dbReference type="PANTHER" id="PTHR43213">
    <property type="entry name" value="BIFUNCTIONAL DTTP/UTP PYROPHOSPHATASE/METHYLTRANSFERASE PROTEIN-RELATED"/>
    <property type="match status" value="1"/>
</dbReference>
<dbReference type="PANTHER" id="PTHR43213:SF5">
    <property type="entry name" value="BIFUNCTIONAL DTTP_UTP PYROPHOSPHATASE_METHYLTRANSFERASE PROTEIN-RELATED"/>
    <property type="match status" value="1"/>
</dbReference>
<dbReference type="Pfam" id="PF02545">
    <property type="entry name" value="Maf"/>
    <property type="match status" value="1"/>
</dbReference>
<dbReference type="PIRSF" id="PIRSF006305">
    <property type="entry name" value="Maf"/>
    <property type="match status" value="1"/>
</dbReference>
<dbReference type="SUPFAM" id="SSF52972">
    <property type="entry name" value="ITPase-like"/>
    <property type="match status" value="1"/>
</dbReference>
<evidence type="ECO:0000255" key="1">
    <source>
        <dbReference type="HAMAP-Rule" id="MF_00528"/>
    </source>
</evidence>
<accession>C3L3L1</accession>
<sequence>MKNIILASASERRQELLKRILEDFQIIVSDFDESSIPFKDNIPSYVMNLAEGKARSVSKKIMDQDSNLVIGCDTLVAFNNKVLGKPKDKKDAFEMLQALSGNEHEVYSGLAILDVKSNKIITDFVCTKVKFSKLTSLQIEKYINTGDPMDKAGAYGIQGKAGVFVENINGCYYNVVGLPLNKLNSMLMEMGVNL</sequence>
<comment type="function">
    <text evidence="1">Nucleoside triphosphate pyrophosphatase that hydrolyzes dTTP and UTP. May have a dual role in cell division arrest and in preventing the incorporation of modified nucleotides into cellular nucleic acids.</text>
</comment>
<comment type="catalytic activity">
    <reaction evidence="1">
        <text>dTTP + H2O = dTMP + diphosphate + H(+)</text>
        <dbReference type="Rhea" id="RHEA:28534"/>
        <dbReference type="ChEBI" id="CHEBI:15377"/>
        <dbReference type="ChEBI" id="CHEBI:15378"/>
        <dbReference type="ChEBI" id="CHEBI:33019"/>
        <dbReference type="ChEBI" id="CHEBI:37568"/>
        <dbReference type="ChEBI" id="CHEBI:63528"/>
        <dbReference type="EC" id="3.6.1.9"/>
    </reaction>
</comment>
<comment type="catalytic activity">
    <reaction evidence="1">
        <text>UTP + H2O = UMP + diphosphate + H(+)</text>
        <dbReference type="Rhea" id="RHEA:29395"/>
        <dbReference type="ChEBI" id="CHEBI:15377"/>
        <dbReference type="ChEBI" id="CHEBI:15378"/>
        <dbReference type="ChEBI" id="CHEBI:33019"/>
        <dbReference type="ChEBI" id="CHEBI:46398"/>
        <dbReference type="ChEBI" id="CHEBI:57865"/>
        <dbReference type="EC" id="3.6.1.9"/>
    </reaction>
</comment>
<comment type="cofactor">
    <cofactor evidence="1">
        <name>a divalent metal cation</name>
        <dbReference type="ChEBI" id="CHEBI:60240"/>
    </cofactor>
</comment>
<comment type="subcellular location">
    <subcellularLocation>
        <location evidence="1">Cytoplasm</location>
    </subcellularLocation>
</comment>
<comment type="similarity">
    <text evidence="1">Belongs to the Maf family. YhdE subfamily.</text>
</comment>
<feature type="chain" id="PRO_1000211766" description="dTTP/UTP pyrophosphatase">
    <location>
        <begin position="1"/>
        <end position="194"/>
    </location>
</feature>
<feature type="active site" description="Proton acceptor" evidence="1">
    <location>
        <position position="73"/>
    </location>
</feature>
<feature type="site" description="Important for substrate specificity" evidence="1">
    <location>
        <position position="12"/>
    </location>
</feature>
<feature type="site" description="Important for substrate specificity" evidence="1">
    <location>
        <position position="74"/>
    </location>
</feature>
<feature type="site" description="Important for substrate specificity" evidence="1">
    <location>
        <position position="158"/>
    </location>
</feature>
<proteinExistence type="inferred from homology"/>
<organism>
    <name type="scientific">Clostridium botulinum (strain 657 / Type Ba4)</name>
    <dbReference type="NCBI Taxonomy" id="515621"/>
    <lineage>
        <taxon>Bacteria</taxon>
        <taxon>Bacillati</taxon>
        <taxon>Bacillota</taxon>
        <taxon>Clostridia</taxon>
        <taxon>Eubacteriales</taxon>
        <taxon>Clostridiaceae</taxon>
        <taxon>Clostridium</taxon>
    </lineage>
</organism>
<name>NTPPA_CLOB6</name>
<keyword id="KW-0963">Cytoplasm</keyword>
<keyword id="KW-0378">Hydrolase</keyword>
<keyword id="KW-0546">Nucleotide metabolism</keyword>
<protein>
    <recommendedName>
        <fullName evidence="1">dTTP/UTP pyrophosphatase</fullName>
        <shortName evidence="1">dTTPase/UTPase</shortName>
        <ecNumber evidence="1">3.6.1.9</ecNumber>
    </recommendedName>
    <alternativeName>
        <fullName evidence="1">Nucleoside triphosphate pyrophosphatase</fullName>
    </alternativeName>
    <alternativeName>
        <fullName evidence="1">Nucleotide pyrophosphatase</fullName>
        <shortName evidence="1">Nucleotide PPase</shortName>
    </alternativeName>
</protein>
<gene>
    <name type="ordered locus">CLJ_B3262</name>
</gene>